<comment type="function">
    <text evidence="1">Catalyzes the folate-dependent formation of 5-methyl-uridine at position 54 (M-5-U54) in all tRNAs.</text>
</comment>
<comment type="catalytic activity">
    <reaction evidence="1">
        <text>uridine(54) in tRNA + (6R)-5,10-methylene-5,6,7,8-tetrahydrofolate + NADH + H(+) = 5-methyluridine(54) in tRNA + (6S)-5,6,7,8-tetrahydrofolate + NAD(+)</text>
        <dbReference type="Rhea" id="RHEA:16873"/>
        <dbReference type="Rhea" id="RHEA-COMP:10167"/>
        <dbReference type="Rhea" id="RHEA-COMP:10193"/>
        <dbReference type="ChEBI" id="CHEBI:15378"/>
        <dbReference type="ChEBI" id="CHEBI:15636"/>
        <dbReference type="ChEBI" id="CHEBI:57453"/>
        <dbReference type="ChEBI" id="CHEBI:57540"/>
        <dbReference type="ChEBI" id="CHEBI:57945"/>
        <dbReference type="ChEBI" id="CHEBI:65315"/>
        <dbReference type="ChEBI" id="CHEBI:74447"/>
        <dbReference type="EC" id="2.1.1.74"/>
    </reaction>
</comment>
<comment type="catalytic activity">
    <reaction evidence="1">
        <text>uridine(54) in tRNA + (6R)-5,10-methylene-5,6,7,8-tetrahydrofolate + NADPH + H(+) = 5-methyluridine(54) in tRNA + (6S)-5,6,7,8-tetrahydrofolate + NADP(+)</text>
        <dbReference type="Rhea" id="RHEA:62372"/>
        <dbReference type="Rhea" id="RHEA-COMP:10167"/>
        <dbReference type="Rhea" id="RHEA-COMP:10193"/>
        <dbReference type="ChEBI" id="CHEBI:15378"/>
        <dbReference type="ChEBI" id="CHEBI:15636"/>
        <dbReference type="ChEBI" id="CHEBI:57453"/>
        <dbReference type="ChEBI" id="CHEBI:57783"/>
        <dbReference type="ChEBI" id="CHEBI:58349"/>
        <dbReference type="ChEBI" id="CHEBI:65315"/>
        <dbReference type="ChEBI" id="CHEBI:74447"/>
        <dbReference type="EC" id="2.1.1.74"/>
    </reaction>
</comment>
<comment type="cofactor">
    <cofactor evidence="1">
        <name>FAD</name>
        <dbReference type="ChEBI" id="CHEBI:57692"/>
    </cofactor>
</comment>
<comment type="subcellular location">
    <subcellularLocation>
        <location evidence="1">Cytoplasm</location>
    </subcellularLocation>
</comment>
<comment type="similarity">
    <text evidence="1">Belongs to the MnmG family. TrmFO subfamily.</text>
</comment>
<feature type="chain" id="PRO_0000346340" description="Methylenetetrahydrofolate--tRNA-(uracil-5-)-methyltransferase TrmFO">
    <location>
        <begin position="1"/>
        <end position="430"/>
    </location>
</feature>
<feature type="binding site" evidence="1">
    <location>
        <begin position="9"/>
        <end position="14"/>
    </location>
    <ligand>
        <name>FAD</name>
        <dbReference type="ChEBI" id="CHEBI:57692"/>
    </ligand>
</feature>
<evidence type="ECO:0000255" key="1">
    <source>
        <dbReference type="HAMAP-Rule" id="MF_01037"/>
    </source>
</evidence>
<proteinExistence type="inferred from homology"/>
<dbReference type="EC" id="2.1.1.74" evidence="1"/>
<dbReference type="EMBL" id="CP000771">
    <property type="protein sequence ID" value="ABS60599.1"/>
    <property type="molecule type" value="Genomic_DNA"/>
</dbReference>
<dbReference type="RefSeq" id="WP_011993917.1">
    <property type="nucleotide sequence ID" value="NC_009718.1"/>
</dbReference>
<dbReference type="SMR" id="A7HL16"/>
<dbReference type="STRING" id="381764.Fnod_0744"/>
<dbReference type="KEGG" id="fno:Fnod_0744"/>
<dbReference type="eggNOG" id="COG1206">
    <property type="taxonomic scope" value="Bacteria"/>
</dbReference>
<dbReference type="HOGENOM" id="CLU_033057_1_0_0"/>
<dbReference type="OrthoDB" id="9803114at2"/>
<dbReference type="Proteomes" id="UP000002415">
    <property type="component" value="Chromosome"/>
</dbReference>
<dbReference type="GO" id="GO:0005829">
    <property type="term" value="C:cytosol"/>
    <property type="evidence" value="ECO:0007669"/>
    <property type="project" value="TreeGrafter"/>
</dbReference>
<dbReference type="GO" id="GO:0050660">
    <property type="term" value="F:flavin adenine dinucleotide binding"/>
    <property type="evidence" value="ECO:0007669"/>
    <property type="project" value="UniProtKB-UniRule"/>
</dbReference>
<dbReference type="GO" id="GO:0047151">
    <property type="term" value="F:tRNA (uracil(54)-C5)-methyltransferase activity, 5,10-methylenetetrahydrofolate-dependent"/>
    <property type="evidence" value="ECO:0007669"/>
    <property type="project" value="UniProtKB-UniRule"/>
</dbReference>
<dbReference type="GO" id="GO:0030488">
    <property type="term" value="P:tRNA methylation"/>
    <property type="evidence" value="ECO:0007669"/>
    <property type="project" value="TreeGrafter"/>
</dbReference>
<dbReference type="GO" id="GO:0002098">
    <property type="term" value="P:tRNA wobble uridine modification"/>
    <property type="evidence" value="ECO:0007669"/>
    <property type="project" value="TreeGrafter"/>
</dbReference>
<dbReference type="Gene3D" id="3.50.50.60">
    <property type="entry name" value="FAD/NAD(P)-binding domain"/>
    <property type="match status" value="2"/>
</dbReference>
<dbReference type="HAMAP" id="MF_01037">
    <property type="entry name" value="TrmFO"/>
    <property type="match status" value="1"/>
</dbReference>
<dbReference type="InterPro" id="IPR036188">
    <property type="entry name" value="FAD/NAD-bd_sf"/>
</dbReference>
<dbReference type="InterPro" id="IPR002218">
    <property type="entry name" value="MnmG-rel"/>
</dbReference>
<dbReference type="InterPro" id="IPR040131">
    <property type="entry name" value="MnmG_N"/>
</dbReference>
<dbReference type="InterPro" id="IPR004417">
    <property type="entry name" value="TrmFO"/>
</dbReference>
<dbReference type="NCBIfam" id="TIGR00137">
    <property type="entry name" value="gid_trmFO"/>
    <property type="match status" value="1"/>
</dbReference>
<dbReference type="NCBIfam" id="NF003739">
    <property type="entry name" value="PRK05335.1"/>
    <property type="match status" value="1"/>
</dbReference>
<dbReference type="PANTHER" id="PTHR11806">
    <property type="entry name" value="GLUCOSE INHIBITED DIVISION PROTEIN A"/>
    <property type="match status" value="1"/>
</dbReference>
<dbReference type="PANTHER" id="PTHR11806:SF2">
    <property type="entry name" value="METHYLENETETRAHYDROFOLATE--TRNA-(URACIL-5-)-METHYLTRANSFERASE TRMFO"/>
    <property type="match status" value="1"/>
</dbReference>
<dbReference type="Pfam" id="PF01134">
    <property type="entry name" value="GIDA"/>
    <property type="match status" value="1"/>
</dbReference>
<dbReference type="SUPFAM" id="SSF51905">
    <property type="entry name" value="FAD/NAD(P)-binding domain"/>
    <property type="match status" value="1"/>
</dbReference>
<keyword id="KW-0963">Cytoplasm</keyword>
<keyword id="KW-0274">FAD</keyword>
<keyword id="KW-0285">Flavoprotein</keyword>
<keyword id="KW-0489">Methyltransferase</keyword>
<keyword id="KW-0520">NAD</keyword>
<keyword id="KW-0521">NADP</keyword>
<keyword id="KW-1185">Reference proteome</keyword>
<keyword id="KW-0808">Transferase</keyword>
<keyword id="KW-0819">tRNA processing</keyword>
<reference key="1">
    <citation type="submission" date="2007-07" db="EMBL/GenBank/DDBJ databases">
        <title>Complete sequence of Fervidobacterium nodosum Rt17-B1.</title>
        <authorList>
            <consortium name="US DOE Joint Genome Institute"/>
            <person name="Copeland A."/>
            <person name="Lucas S."/>
            <person name="Lapidus A."/>
            <person name="Barry K."/>
            <person name="Glavina del Rio T."/>
            <person name="Dalin E."/>
            <person name="Tice H."/>
            <person name="Pitluck S."/>
            <person name="Saunders E."/>
            <person name="Brettin T."/>
            <person name="Bruce D."/>
            <person name="Detter J.C."/>
            <person name="Han C."/>
            <person name="Schmutz J."/>
            <person name="Larimer F."/>
            <person name="Land M."/>
            <person name="Hauser L."/>
            <person name="Kyrpides N."/>
            <person name="Mikhailova N."/>
            <person name="Nelson K."/>
            <person name="Gogarten J.P."/>
            <person name="Noll K."/>
            <person name="Richardson P."/>
        </authorList>
    </citation>
    <scope>NUCLEOTIDE SEQUENCE [LARGE SCALE GENOMIC DNA]</scope>
    <source>
        <strain>ATCC 35602 / DSM 5306 / Rt17-B1</strain>
    </source>
</reference>
<name>TRMFO_FERNB</name>
<accession>A7HL16</accession>
<protein>
    <recommendedName>
        <fullName evidence="1">Methylenetetrahydrofolate--tRNA-(uracil-5-)-methyltransferase TrmFO</fullName>
        <ecNumber evidence="1">2.1.1.74</ecNumber>
    </recommendedName>
    <alternativeName>
        <fullName evidence="1">Folate-dependent tRNA (uracil-5-)-methyltransferase</fullName>
    </alternativeName>
    <alternativeName>
        <fullName evidence="1">Folate-dependent tRNA(M-5-U54)-methyltransferase</fullName>
    </alternativeName>
</protein>
<organism>
    <name type="scientific">Fervidobacterium nodosum (strain ATCC 35602 / DSM 5306 / Rt17-B1)</name>
    <dbReference type="NCBI Taxonomy" id="381764"/>
    <lineage>
        <taxon>Bacteria</taxon>
        <taxon>Thermotogati</taxon>
        <taxon>Thermotogota</taxon>
        <taxon>Thermotogae</taxon>
        <taxon>Thermotogales</taxon>
        <taxon>Fervidobacteriaceae</taxon>
        <taxon>Fervidobacterium</taxon>
    </lineage>
</organism>
<sequence>MNKLVHIIGAGLAGSEAAWQLVKNGFNVVIHEMKRVKKSPVHVSENFAELVCSNSLKSTDLKNAEGLLKAEMEIWGSLILECAYNNSVPAGKALAVDREKFSQCVTEKLLQTGLVKVVWEEVEKPYTDDIWIIATGPTTDGKLAEWIREQTGGFFNFFDAVAPIVSAESINMDVCFVADRYGVGTGDYINCPMTKEEYERFWNELVNAQVIEIEDFDRKLLFERCQPIEEIARSGKDAMRYGPLRPVGIVDPKTGKEPYAVIQLRKENVEGTMYNIVGFQTRLKWGEQRRIIQLIPGLENAEILRYGVMHRNSYIDSPKVLDEYLRLKKMPNVFFAGQITGVEGYVESAMTGLYVGLNISRLILGKDMIKFPEKTMCGALVRYITTAPELKPMYANFGLLGGGKDREKIALKALDEMKKFYQITSLTIGG</sequence>
<gene>
    <name evidence="1" type="primary">trmFO</name>
    <name type="ordered locus">Fnod_0744</name>
</gene>